<dbReference type="EMBL" id="AL123456">
    <property type="protein sequence ID" value="CCP44076.1"/>
    <property type="molecule type" value="Genomic_DNA"/>
</dbReference>
<dbReference type="PIR" id="C70769">
    <property type="entry name" value="C70769"/>
</dbReference>
<dbReference type="RefSeq" id="NP_215835.1">
    <property type="nucleotide sequence ID" value="NC_000962.3"/>
</dbReference>
<dbReference type="RefSeq" id="WP_003406867.1">
    <property type="nucleotide sequence ID" value="NZ_NVQJ01000059.1"/>
</dbReference>
<dbReference type="SMR" id="P9WQ31"/>
<dbReference type="FunCoup" id="P9WQ31">
    <property type="interactions" value="3"/>
</dbReference>
<dbReference type="STRING" id="83332.Rv1319c"/>
<dbReference type="PaxDb" id="83332-Rv1319c"/>
<dbReference type="DNASU" id="886911"/>
<dbReference type="GeneID" id="886911"/>
<dbReference type="KEGG" id="mtu:Rv1319c"/>
<dbReference type="KEGG" id="mtv:RVBD_1319c"/>
<dbReference type="TubercuList" id="Rv1319c"/>
<dbReference type="eggNOG" id="COG2114">
    <property type="taxonomic scope" value="Bacteria"/>
</dbReference>
<dbReference type="eggNOG" id="COG2972">
    <property type="taxonomic scope" value="Bacteria"/>
</dbReference>
<dbReference type="InParanoid" id="P9WQ31"/>
<dbReference type="OrthoDB" id="368920at2"/>
<dbReference type="PhylomeDB" id="P9WQ31"/>
<dbReference type="BRENDA" id="4.6.1.1">
    <property type="organism ID" value="25548"/>
</dbReference>
<dbReference type="Proteomes" id="UP000001584">
    <property type="component" value="Chromosome"/>
</dbReference>
<dbReference type="GO" id="GO:0005576">
    <property type="term" value="C:extracellular region"/>
    <property type="evidence" value="ECO:0007005"/>
    <property type="project" value="MTBBASE"/>
</dbReference>
<dbReference type="GO" id="GO:0005886">
    <property type="term" value="C:plasma membrane"/>
    <property type="evidence" value="ECO:0007669"/>
    <property type="project" value="UniProtKB-SubCell"/>
</dbReference>
<dbReference type="GO" id="GO:0004016">
    <property type="term" value="F:adenylate cyclase activity"/>
    <property type="evidence" value="ECO:0000314"/>
    <property type="project" value="MTBBASE"/>
</dbReference>
<dbReference type="GO" id="GO:0006171">
    <property type="term" value="P:cAMP biosynthetic process"/>
    <property type="evidence" value="ECO:0000314"/>
    <property type="project" value="MTBBASE"/>
</dbReference>
<dbReference type="GO" id="GO:0035556">
    <property type="term" value="P:intracellular signal transduction"/>
    <property type="evidence" value="ECO:0007669"/>
    <property type="project" value="InterPro"/>
</dbReference>
<dbReference type="CDD" id="cd07302">
    <property type="entry name" value="CHD"/>
    <property type="match status" value="1"/>
</dbReference>
<dbReference type="CDD" id="cd06225">
    <property type="entry name" value="HAMP"/>
    <property type="match status" value="1"/>
</dbReference>
<dbReference type="FunFam" id="3.30.70.1230:FF:000016">
    <property type="entry name" value="Adenylate/guanylate cyclase domain-containing protein"/>
    <property type="match status" value="1"/>
</dbReference>
<dbReference type="Gene3D" id="6.10.340.10">
    <property type="match status" value="1"/>
</dbReference>
<dbReference type="Gene3D" id="3.30.70.1230">
    <property type="entry name" value="Nucleotide cyclase"/>
    <property type="match status" value="1"/>
</dbReference>
<dbReference type="InterPro" id="IPR001054">
    <property type="entry name" value="A/G_cyclase"/>
</dbReference>
<dbReference type="InterPro" id="IPR050697">
    <property type="entry name" value="Adenylyl/Guanylyl_Cyclase_3/4"/>
</dbReference>
<dbReference type="InterPro" id="IPR003660">
    <property type="entry name" value="HAMP_dom"/>
</dbReference>
<dbReference type="InterPro" id="IPR029787">
    <property type="entry name" value="Nucleotide_cyclase"/>
</dbReference>
<dbReference type="PANTHER" id="PTHR43081">
    <property type="entry name" value="ADENYLATE CYCLASE, TERMINAL-DIFFERENTIATION SPECIFIC-RELATED"/>
    <property type="match status" value="1"/>
</dbReference>
<dbReference type="PANTHER" id="PTHR43081:SF17">
    <property type="entry name" value="BLL5647 PROTEIN"/>
    <property type="match status" value="1"/>
</dbReference>
<dbReference type="Pfam" id="PF00211">
    <property type="entry name" value="Guanylate_cyc"/>
    <property type="match status" value="1"/>
</dbReference>
<dbReference type="Pfam" id="PF00672">
    <property type="entry name" value="HAMP"/>
    <property type="match status" value="1"/>
</dbReference>
<dbReference type="SMART" id="SM00044">
    <property type="entry name" value="CYCc"/>
    <property type="match status" value="1"/>
</dbReference>
<dbReference type="SMART" id="SM00304">
    <property type="entry name" value="HAMP"/>
    <property type="match status" value="1"/>
</dbReference>
<dbReference type="SUPFAM" id="SSF158472">
    <property type="entry name" value="HAMP domain-like"/>
    <property type="match status" value="1"/>
</dbReference>
<dbReference type="SUPFAM" id="SSF55073">
    <property type="entry name" value="Nucleotide cyclase"/>
    <property type="match status" value="1"/>
</dbReference>
<dbReference type="PROSITE" id="PS50125">
    <property type="entry name" value="GUANYLATE_CYCLASE_2"/>
    <property type="match status" value="1"/>
</dbReference>
<dbReference type="PROSITE" id="PS50885">
    <property type="entry name" value="HAMP"/>
    <property type="match status" value="1"/>
</dbReference>
<gene>
    <name type="ordered locus">Rv1319c</name>
    <name type="ORF">MTCY130.04c</name>
</gene>
<protein>
    <recommendedName>
        <fullName>Uncharacterized protein Rv1319c</fullName>
    </recommendedName>
</protein>
<sequence>MPAKKTMAQRLGQALETMTRQCGQLPETPAYGSWLLGRVSESPSRRWVRIKRIVTVYIMTANLTGIVVALLVVTFAFPVPSIYTDAPWWVTFGVAPAYATLALAIGTYWITTRIVRASIRWAIEERAPSQADGRNTLLLPFRVAAVHLILWDIGGALLATLYGLANRVFVTIILFSVTICGVLVATNCYLFTEFALRPVAAKALEAGRPPRRFAPGIMGRTMTVWSLGSGVPVTGIATTALYVLLVHNLTETQLASAVLILSITTLIFGFLVMWILAWLTAAPVRVVRAALKRVEQGDLRGDLVVFDGTELGELQRGFNAMVNGLRERERVRDLFGRHVGREVAAAAERERPQLGGEDRHAAVVFVDIVGSTQLVDNQPAAHVVKLLNRFFAIVVNEVDRHHGLINKFAGDAALAIFGAPNRLDRPEDAALAAARAIADRLANEMPEVQAGIGVAAGQIVAGNVGAKQRFEYTVVGKPVNQAARLCELAKSHPARLLASSDTLHAASETERAHWSLGETVTLRGHEQPTRLAVPT</sequence>
<reference key="1">
    <citation type="journal article" date="1998" name="Nature">
        <title>Deciphering the biology of Mycobacterium tuberculosis from the complete genome sequence.</title>
        <authorList>
            <person name="Cole S.T."/>
            <person name="Brosch R."/>
            <person name="Parkhill J."/>
            <person name="Garnier T."/>
            <person name="Churcher C.M."/>
            <person name="Harris D.E."/>
            <person name="Gordon S.V."/>
            <person name="Eiglmeier K."/>
            <person name="Gas S."/>
            <person name="Barry C.E. III"/>
            <person name="Tekaia F."/>
            <person name="Badcock K."/>
            <person name="Basham D."/>
            <person name="Brown D."/>
            <person name="Chillingworth T."/>
            <person name="Connor R."/>
            <person name="Davies R.M."/>
            <person name="Devlin K."/>
            <person name="Feltwell T."/>
            <person name="Gentles S."/>
            <person name="Hamlin N."/>
            <person name="Holroyd S."/>
            <person name="Hornsby T."/>
            <person name="Jagels K."/>
            <person name="Krogh A."/>
            <person name="McLean J."/>
            <person name="Moule S."/>
            <person name="Murphy L.D."/>
            <person name="Oliver S."/>
            <person name="Osborne J."/>
            <person name="Quail M.A."/>
            <person name="Rajandream M.A."/>
            <person name="Rogers J."/>
            <person name="Rutter S."/>
            <person name="Seeger K."/>
            <person name="Skelton S."/>
            <person name="Squares S."/>
            <person name="Squares R."/>
            <person name="Sulston J.E."/>
            <person name="Taylor K."/>
            <person name="Whitehead S."/>
            <person name="Barrell B.G."/>
        </authorList>
    </citation>
    <scope>NUCLEOTIDE SEQUENCE [LARGE SCALE GENOMIC DNA]</scope>
    <source>
        <strain>ATCC 25618 / H37Rv</strain>
    </source>
</reference>
<reference key="2">
    <citation type="journal article" date="2011" name="Mol. Cell. Proteomics">
        <title>Proteogenomic analysis of Mycobacterium tuberculosis by high resolution mass spectrometry.</title>
        <authorList>
            <person name="Kelkar D.S."/>
            <person name="Kumar D."/>
            <person name="Kumar P."/>
            <person name="Balakrishnan L."/>
            <person name="Muthusamy B."/>
            <person name="Yadav A.K."/>
            <person name="Shrivastava P."/>
            <person name="Marimuthu A."/>
            <person name="Anand S."/>
            <person name="Sundaram H."/>
            <person name="Kingsbury R."/>
            <person name="Harsha H.C."/>
            <person name="Nair B."/>
            <person name="Prasad T.S."/>
            <person name="Chauhan D.S."/>
            <person name="Katoch K."/>
            <person name="Katoch V.M."/>
            <person name="Kumar P."/>
            <person name="Chaerkady R."/>
            <person name="Ramachandran S."/>
            <person name="Dash D."/>
            <person name="Pandey A."/>
        </authorList>
    </citation>
    <scope>IDENTIFICATION BY MASS SPECTROMETRY [LARGE SCALE ANALYSIS]</scope>
    <source>
        <strain>ATCC 25618 / H37Rv</strain>
    </source>
</reference>
<feature type="chain" id="PRO_0000195754" description="Uncharacterized protein Rv1319c">
    <location>
        <begin position="1"/>
        <end position="535"/>
    </location>
</feature>
<feature type="transmembrane region" description="Helical" evidence="1">
    <location>
        <begin position="63"/>
        <end position="83"/>
    </location>
</feature>
<feature type="transmembrane region" description="Helical" evidence="1">
    <location>
        <begin position="90"/>
        <end position="110"/>
    </location>
</feature>
<feature type="transmembrane region" description="Helical" evidence="1">
    <location>
        <begin position="143"/>
        <end position="163"/>
    </location>
</feature>
<feature type="transmembrane region" description="Helical" evidence="1">
    <location>
        <begin position="168"/>
        <end position="188"/>
    </location>
</feature>
<feature type="transmembrane region" description="Helical" evidence="1">
    <location>
        <begin position="226"/>
        <end position="246"/>
    </location>
</feature>
<feature type="transmembrane region" description="Helical" evidence="1">
    <location>
        <begin position="258"/>
        <end position="278"/>
    </location>
</feature>
<feature type="domain" description="HAMP" evidence="3">
    <location>
        <begin position="279"/>
        <end position="330"/>
    </location>
</feature>
<feature type="domain" description="Guanylate cyclase" evidence="2">
    <location>
        <begin position="362"/>
        <end position="486"/>
    </location>
</feature>
<proteinExistence type="evidence at protein level"/>
<name>Y1319_MYCTU</name>
<comment type="subcellular location">
    <subcellularLocation>
        <location evidence="4">Cell membrane</location>
        <topology evidence="4">Multi-pass membrane protein</topology>
    </subcellularLocation>
</comment>
<comment type="similarity">
    <text evidence="4">Belongs to the adenylyl cyclase class-3 family.</text>
</comment>
<accession>P9WQ31</accession>
<accession>L0T6A5</accession>
<accession>P0A4Y2</accession>
<accession>Q10632</accession>
<evidence type="ECO:0000255" key="1"/>
<evidence type="ECO:0000255" key="2">
    <source>
        <dbReference type="PROSITE-ProRule" id="PRU00099"/>
    </source>
</evidence>
<evidence type="ECO:0000255" key="3">
    <source>
        <dbReference type="PROSITE-ProRule" id="PRU00102"/>
    </source>
</evidence>
<evidence type="ECO:0000305" key="4"/>
<keyword id="KW-1003">Cell membrane</keyword>
<keyword id="KW-0472">Membrane</keyword>
<keyword id="KW-1185">Reference proteome</keyword>
<keyword id="KW-0812">Transmembrane</keyword>
<keyword id="KW-1133">Transmembrane helix</keyword>
<organism>
    <name type="scientific">Mycobacterium tuberculosis (strain ATCC 25618 / H37Rv)</name>
    <dbReference type="NCBI Taxonomy" id="83332"/>
    <lineage>
        <taxon>Bacteria</taxon>
        <taxon>Bacillati</taxon>
        <taxon>Actinomycetota</taxon>
        <taxon>Actinomycetes</taxon>
        <taxon>Mycobacteriales</taxon>
        <taxon>Mycobacteriaceae</taxon>
        <taxon>Mycobacterium</taxon>
        <taxon>Mycobacterium tuberculosis complex</taxon>
    </lineage>
</organism>